<feature type="chain" id="PRO_1000006657" description="Aspartate--tRNA(Asp/Asn) ligase">
    <location>
        <begin position="1"/>
        <end position="583"/>
    </location>
</feature>
<feature type="region of interest" description="Aspartate" evidence="1">
    <location>
        <begin position="197"/>
        <end position="200"/>
    </location>
</feature>
<feature type="binding site" evidence="1">
    <location>
        <position position="173"/>
    </location>
    <ligand>
        <name>L-aspartate</name>
        <dbReference type="ChEBI" id="CHEBI:29991"/>
    </ligand>
</feature>
<feature type="binding site" evidence="1">
    <location>
        <begin position="219"/>
        <end position="221"/>
    </location>
    <ligand>
        <name>ATP</name>
        <dbReference type="ChEBI" id="CHEBI:30616"/>
    </ligand>
</feature>
<feature type="binding site" evidence="1">
    <location>
        <position position="219"/>
    </location>
    <ligand>
        <name>L-aspartate</name>
        <dbReference type="ChEBI" id="CHEBI:29991"/>
    </ligand>
</feature>
<feature type="binding site" evidence="1">
    <location>
        <position position="228"/>
    </location>
    <ligand>
        <name>ATP</name>
        <dbReference type="ChEBI" id="CHEBI:30616"/>
    </ligand>
</feature>
<feature type="binding site" evidence="1">
    <location>
        <position position="447"/>
    </location>
    <ligand>
        <name>L-aspartate</name>
        <dbReference type="ChEBI" id="CHEBI:29991"/>
    </ligand>
</feature>
<feature type="binding site" evidence="1">
    <location>
        <position position="477"/>
    </location>
    <ligand>
        <name>ATP</name>
        <dbReference type="ChEBI" id="CHEBI:30616"/>
    </ligand>
</feature>
<feature type="binding site" evidence="1">
    <location>
        <position position="484"/>
    </location>
    <ligand>
        <name>L-aspartate</name>
        <dbReference type="ChEBI" id="CHEBI:29991"/>
    </ligand>
</feature>
<feature type="binding site" evidence="1">
    <location>
        <begin position="529"/>
        <end position="532"/>
    </location>
    <ligand>
        <name>ATP</name>
        <dbReference type="ChEBI" id="CHEBI:30616"/>
    </ligand>
</feature>
<feature type="site" description="Important for tRNA non-discrimination" evidence="1">
    <location>
        <position position="30"/>
    </location>
</feature>
<feature type="site" description="Important for tRNA non-discrimination" evidence="1">
    <location>
        <position position="82"/>
    </location>
</feature>
<comment type="function">
    <text evidence="1">Aspartyl-tRNA synthetase with relaxed tRNA specificity since it is able to aspartylate not only its cognate tRNA(Asp) but also tRNA(Asn). Reaction proceeds in two steps: L-aspartate is first activated by ATP to form Asp-AMP and then transferred to the acceptor end of tRNA(Asp/Asn).</text>
</comment>
<comment type="catalytic activity">
    <reaction evidence="1">
        <text>tRNA(Asx) + L-aspartate + ATP = L-aspartyl-tRNA(Asx) + AMP + diphosphate</text>
        <dbReference type="Rhea" id="RHEA:18349"/>
        <dbReference type="Rhea" id="RHEA-COMP:9710"/>
        <dbReference type="Rhea" id="RHEA-COMP:9711"/>
        <dbReference type="ChEBI" id="CHEBI:29991"/>
        <dbReference type="ChEBI" id="CHEBI:30616"/>
        <dbReference type="ChEBI" id="CHEBI:33019"/>
        <dbReference type="ChEBI" id="CHEBI:78442"/>
        <dbReference type="ChEBI" id="CHEBI:78516"/>
        <dbReference type="ChEBI" id="CHEBI:456215"/>
        <dbReference type="EC" id="6.1.1.23"/>
    </reaction>
</comment>
<comment type="subunit">
    <text evidence="1">Homodimer.</text>
</comment>
<comment type="subcellular location">
    <subcellularLocation>
        <location evidence="1">Cytoplasm</location>
    </subcellularLocation>
</comment>
<comment type="similarity">
    <text evidence="1">Belongs to the class-II aminoacyl-tRNA synthetase family. Type 1 subfamily.</text>
</comment>
<organism>
    <name type="scientific">Campylobacter jejuni subsp. doylei (strain ATCC BAA-1458 / RM4099 / 269.97)</name>
    <dbReference type="NCBI Taxonomy" id="360109"/>
    <lineage>
        <taxon>Bacteria</taxon>
        <taxon>Pseudomonadati</taxon>
        <taxon>Campylobacterota</taxon>
        <taxon>Epsilonproteobacteria</taxon>
        <taxon>Campylobacterales</taxon>
        <taxon>Campylobacteraceae</taxon>
        <taxon>Campylobacter</taxon>
    </lineage>
</organism>
<protein>
    <recommendedName>
        <fullName evidence="1">Aspartate--tRNA(Asp/Asn) ligase</fullName>
        <ecNumber evidence="1">6.1.1.23</ecNumber>
    </recommendedName>
    <alternativeName>
        <fullName evidence="1">Aspartyl-tRNA synthetase</fullName>
        <shortName evidence="1">AspRS</shortName>
    </alternativeName>
    <alternativeName>
        <fullName evidence="1">Non-discriminating aspartyl-tRNA synthetase</fullName>
        <shortName evidence="1">ND-AspRS</shortName>
    </alternativeName>
</protein>
<sequence length="583" mass="66161">MRSHYNIDLGISHVGQSVKLCGWVNSYRDHGGVIFIDLRDRSGIIQLVCDPNDSKEAHEIASNARNEFVLIAEGTIRPRGEGLVNPKLKTGEIEVVVSKLTIENESIVPPFAIADESVNEELRLKYRFLDLRNPKLYENFALRSKACIAARNSLANMGFLEVETPILTKATPEGARDYLVPSRVHQGEFYALPQSPQLFKQLLMCSGFDRYFQIAKCFRDEDLRADRQPEFTQIDVEMSFCEKKDVINVAETFLKDIFKACGKEIQTPFRQMQYKDAMENYGSDKPDLRFDLKFIDVIDIFAKSNNEIFANIAKDTKKNRIKAIRVPKGDTIFSKRQMQRFEEFVRKFGAEGLAFIQVKEDGLKGPLCKFFSEEDLNELSKRCKLEVGDVVFFGAGAKKTVLDYMGRFRIFLANELNLIDPNALEFLWVVDFPMFEQNDDGSYSAMHHPFTMPKNIDENDLEEISSIAYDVVLNGVELGGGSIRIHKNDIQQKVFKLLNIDEEQQKEKFGFLLDALSFGAPPHGGIAIGLDRLIMLVTGANSIREVIAFPKTQRAQCLMTEAPSPASNEAMRELGIKLRENIK</sequence>
<proteinExistence type="inferred from homology"/>
<keyword id="KW-0030">Aminoacyl-tRNA synthetase</keyword>
<keyword id="KW-0067">ATP-binding</keyword>
<keyword id="KW-0963">Cytoplasm</keyword>
<keyword id="KW-0436">Ligase</keyword>
<keyword id="KW-0547">Nucleotide-binding</keyword>
<keyword id="KW-0648">Protein biosynthesis</keyword>
<reference key="1">
    <citation type="submission" date="2007-07" db="EMBL/GenBank/DDBJ databases">
        <title>Complete genome sequence of Campylobacter jejuni subsp doylei 269.97 isolated from human blood.</title>
        <authorList>
            <person name="Fouts D.E."/>
            <person name="Mongodin E.F."/>
            <person name="Puiu D."/>
            <person name="Sebastian Y."/>
            <person name="Miller W.G."/>
            <person name="Mandrell R.E."/>
            <person name="Lastovica A.J."/>
            <person name="Nelson K.E."/>
        </authorList>
    </citation>
    <scope>NUCLEOTIDE SEQUENCE [LARGE SCALE GENOMIC DNA]</scope>
    <source>
        <strain>ATCC BAA-1458 / RM4099 / 269.97</strain>
    </source>
</reference>
<accession>A7H4H2</accession>
<evidence type="ECO:0000255" key="1">
    <source>
        <dbReference type="HAMAP-Rule" id="MF_00044"/>
    </source>
</evidence>
<gene>
    <name evidence="1" type="primary">aspS</name>
    <name type="ordered locus">JJD26997_1359</name>
</gene>
<name>SYDND_CAMJD</name>
<dbReference type="EC" id="6.1.1.23" evidence="1"/>
<dbReference type="EMBL" id="CP000768">
    <property type="protein sequence ID" value="ABS43672.1"/>
    <property type="molecule type" value="Genomic_DNA"/>
</dbReference>
<dbReference type="SMR" id="A7H4H2"/>
<dbReference type="KEGG" id="cjd:JJD26997_1359"/>
<dbReference type="HOGENOM" id="CLU_014330_3_2_7"/>
<dbReference type="Proteomes" id="UP000002302">
    <property type="component" value="Chromosome"/>
</dbReference>
<dbReference type="GO" id="GO:0005737">
    <property type="term" value="C:cytoplasm"/>
    <property type="evidence" value="ECO:0007669"/>
    <property type="project" value="UniProtKB-SubCell"/>
</dbReference>
<dbReference type="GO" id="GO:0004815">
    <property type="term" value="F:aspartate-tRNA ligase activity"/>
    <property type="evidence" value="ECO:0007669"/>
    <property type="project" value="UniProtKB-UniRule"/>
</dbReference>
<dbReference type="GO" id="GO:0050560">
    <property type="term" value="F:aspartate-tRNA(Asn) ligase activity"/>
    <property type="evidence" value="ECO:0007669"/>
    <property type="project" value="UniProtKB-EC"/>
</dbReference>
<dbReference type="GO" id="GO:0005524">
    <property type="term" value="F:ATP binding"/>
    <property type="evidence" value="ECO:0007669"/>
    <property type="project" value="UniProtKB-UniRule"/>
</dbReference>
<dbReference type="GO" id="GO:0003676">
    <property type="term" value="F:nucleic acid binding"/>
    <property type="evidence" value="ECO:0007669"/>
    <property type="project" value="InterPro"/>
</dbReference>
<dbReference type="GO" id="GO:0006422">
    <property type="term" value="P:aspartyl-tRNA aminoacylation"/>
    <property type="evidence" value="ECO:0007669"/>
    <property type="project" value="UniProtKB-UniRule"/>
</dbReference>
<dbReference type="CDD" id="cd00777">
    <property type="entry name" value="AspRS_core"/>
    <property type="match status" value="1"/>
</dbReference>
<dbReference type="CDD" id="cd04317">
    <property type="entry name" value="EcAspRS_like_N"/>
    <property type="match status" value="1"/>
</dbReference>
<dbReference type="Gene3D" id="3.30.930.10">
    <property type="entry name" value="Bira Bifunctional Protein, Domain 2"/>
    <property type="match status" value="1"/>
</dbReference>
<dbReference type="Gene3D" id="3.30.1360.30">
    <property type="entry name" value="GAD-like domain"/>
    <property type="match status" value="1"/>
</dbReference>
<dbReference type="Gene3D" id="2.40.50.140">
    <property type="entry name" value="Nucleic acid-binding proteins"/>
    <property type="match status" value="1"/>
</dbReference>
<dbReference type="HAMAP" id="MF_00044">
    <property type="entry name" value="Asp_tRNA_synth_type1"/>
    <property type="match status" value="1"/>
</dbReference>
<dbReference type="InterPro" id="IPR004364">
    <property type="entry name" value="Aa-tRNA-synt_II"/>
</dbReference>
<dbReference type="InterPro" id="IPR006195">
    <property type="entry name" value="aa-tRNA-synth_II"/>
</dbReference>
<dbReference type="InterPro" id="IPR045864">
    <property type="entry name" value="aa-tRNA-synth_II/BPL/LPL"/>
</dbReference>
<dbReference type="InterPro" id="IPR004524">
    <property type="entry name" value="Asp-tRNA-ligase_1"/>
</dbReference>
<dbReference type="InterPro" id="IPR047089">
    <property type="entry name" value="Asp-tRNA-ligase_1_N"/>
</dbReference>
<dbReference type="InterPro" id="IPR002312">
    <property type="entry name" value="Asp/Asn-tRNA-synth_IIb"/>
</dbReference>
<dbReference type="InterPro" id="IPR047090">
    <property type="entry name" value="AspRS_core"/>
</dbReference>
<dbReference type="InterPro" id="IPR004115">
    <property type="entry name" value="GAD-like_sf"/>
</dbReference>
<dbReference type="InterPro" id="IPR029351">
    <property type="entry name" value="GAD_dom"/>
</dbReference>
<dbReference type="InterPro" id="IPR012340">
    <property type="entry name" value="NA-bd_OB-fold"/>
</dbReference>
<dbReference type="InterPro" id="IPR004365">
    <property type="entry name" value="NA-bd_OB_tRNA"/>
</dbReference>
<dbReference type="NCBIfam" id="TIGR00459">
    <property type="entry name" value="aspS_bact"/>
    <property type="match status" value="1"/>
</dbReference>
<dbReference type="NCBIfam" id="NF001750">
    <property type="entry name" value="PRK00476.1"/>
    <property type="match status" value="1"/>
</dbReference>
<dbReference type="PANTHER" id="PTHR22594:SF5">
    <property type="entry name" value="ASPARTATE--TRNA LIGASE, MITOCHONDRIAL"/>
    <property type="match status" value="1"/>
</dbReference>
<dbReference type="PANTHER" id="PTHR22594">
    <property type="entry name" value="ASPARTYL/LYSYL-TRNA SYNTHETASE"/>
    <property type="match status" value="1"/>
</dbReference>
<dbReference type="Pfam" id="PF02938">
    <property type="entry name" value="GAD"/>
    <property type="match status" value="1"/>
</dbReference>
<dbReference type="Pfam" id="PF00152">
    <property type="entry name" value="tRNA-synt_2"/>
    <property type="match status" value="1"/>
</dbReference>
<dbReference type="Pfam" id="PF01336">
    <property type="entry name" value="tRNA_anti-codon"/>
    <property type="match status" value="1"/>
</dbReference>
<dbReference type="PRINTS" id="PR01042">
    <property type="entry name" value="TRNASYNTHASP"/>
</dbReference>
<dbReference type="SUPFAM" id="SSF55681">
    <property type="entry name" value="Class II aaRS and biotin synthetases"/>
    <property type="match status" value="1"/>
</dbReference>
<dbReference type="SUPFAM" id="SSF55261">
    <property type="entry name" value="GAD domain-like"/>
    <property type="match status" value="1"/>
</dbReference>
<dbReference type="SUPFAM" id="SSF50249">
    <property type="entry name" value="Nucleic acid-binding proteins"/>
    <property type="match status" value="1"/>
</dbReference>
<dbReference type="PROSITE" id="PS50862">
    <property type="entry name" value="AA_TRNA_LIGASE_II"/>
    <property type="match status" value="1"/>
</dbReference>